<dbReference type="EMBL" id="AE014075">
    <property type="protein sequence ID" value="AAN79860.1"/>
    <property type="molecule type" value="Genomic_DNA"/>
</dbReference>
<dbReference type="RefSeq" id="WP_000284714.1">
    <property type="nucleotide sequence ID" value="NZ_CP051263.1"/>
</dbReference>
<dbReference type="SMR" id="P0ADC4"/>
<dbReference type="STRING" id="199310.c1391"/>
<dbReference type="GeneID" id="93776292"/>
<dbReference type="KEGG" id="ecc:c1391"/>
<dbReference type="eggNOG" id="COG4591">
    <property type="taxonomic scope" value="Bacteria"/>
</dbReference>
<dbReference type="HOGENOM" id="CLU_000604_8_1_6"/>
<dbReference type="BioCyc" id="ECOL199310:C1391-MONOMER"/>
<dbReference type="Proteomes" id="UP000001410">
    <property type="component" value="Chromosome"/>
</dbReference>
<dbReference type="GO" id="GO:0098797">
    <property type="term" value="C:plasma membrane protein complex"/>
    <property type="evidence" value="ECO:0007669"/>
    <property type="project" value="TreeGrafter"/>
</dbReference>
<dbReference type="GO" id="GO:0044874">
    <property type="term" value="P:lipoprotein localization to outer membrane"/>
    <property type="evidence" value="ECO:0007669"/>
    <property type="project" value="TreeGrafter"/>
</dbReference>
<dbReference type="GO" id="GO:0042953">
    <property type="term" value="P:lipoprotein transport"/>
    <property type="evidence" value="ECO:0007669"/>
    <property type="project" value="InterPro"/>
</dbReference>
<dbReference type="InterPro" id="IPR003838">
    <property type="entry name" value="ABC3_permease_C"/>
</dbReference>
<dbReference type="InterPro" id="IPR051447">
    <property type="entry name" value="Lipoprotein-release_system"/>
</dbReference>
<dbReference type="InterPro" id="IPR011925">
    <property type="entry name" value="LolCE_TM"/>
</dbReference>
<dbReference type="InterPro" id="IPR025857">
    <property type="entry name" value="MacB_PCD"/>
</dbReference>
<dbReference type="NCBIfam" id="TIGR02212">
    <property type="entry name" value="lolCE"/>
    <property type="match status" value="1"/>
</dbReference>
<dbReference type="NCBIfam" id="NF008076">
    <property type="entry name" value="PRK10814.1"/>
    <property type="match status" value="1"/>
</dbReference>
<dbReference type="PANTHER" id="PTHR30489:SF8">
    <property type="entry name" value="LIPOPROTEIN-RELEASING SYSTEM TRANSMEMBRANE PROTEIN LOLC"/>
    <property type="match status" value="1"/>
</dbReference>
<dbReference type="PANTHER" id="PTHR30489">
    <property type="entry name" value="LIPOPROTEIN-RELEASING SYSTEM TRANSMEMBRANE PROTEIN LOLE"/>
    <property type="match status" value="1"/>
</dbReference>
<dbReference type="Pfam" id="PF02687">
    <property type="entry name" value="FtsX"/>
    <property type="match status" value="1"/>
</dbReference>
<dbReference type="Pfam" id="PF12704">
    <property type="entry name" value="MacB_PCD"/>
    <property type="match status" value="1"/>
</dbReference>
<sequence>MYQPVALFIGLRYMRGRAADRFGRFVSWLSTIGITLGVMALVTVLSVMNGFERELQNNILGLMPQAILSSEHGSLNPQQLPETAVKLDGVNRVAPITTGDVVLQSARSVAVGVMLGIDPAQKDPLTPYLVNVKQTDLEPGKYNVILGEQLASQLGVNRGDQIRVMVPSASQFTPMGRIPSQRLFNVIGTFAANSEVDGYEMLVNIEDASRLMRYPAGNITGWRLWLDEPLKVDSLSQQKLPEGSKWQDWRDRKGELFQAVRMEKNMMGLLLSLIVAVAAFNIITSLGLMVMEKQGEVAILQTQGLTPRQIMMVFMVQGASAGIIGAILGAALGALLASQLNNLMPIIGVLLDGAALPVAIEPLQVIVIALVAMAIALLSTLYPSWRAAATQPAEALRYE</sequence>
<protein>
    <recommendedName>
        <fullName>Lipoprotein-releasing system transmembrane protein LolC</fullName>
    </recommendedName>
</protein>
<feature type="chain" id="PRO_0000201812" description="Lipoprotein-releasing system transmembrane protein LolC">
    <location>
        <begin position="1"/>
        <end position="399"/>
    </location>
</feature>
<feature type="transmembrane region" description="Helical" evidence="2">
    <location>
        <begin position="25"/>
        <end position="45"/>
    </location>
</feature>
<feature type="transmembrane region" description="Helical" evidence="2">
    <location>
        <begin position="270"/>
        <end position="290"/>
    </location>
</feature>
<feature type="transmembrane region" description="Helical" evidence="2">
    <location>
        <begin position="310"/>
        <end position="330"/>
    </location>
</feature>
<feature type="transmembrane region" description="Helical" evidence="2">
    <location>
        <begin position="358"/>
        <end position="378"/>
    </location>
</feature>
<evidence type="ECO:0000250" key="1"/>
<evidence type="ECO:0000255" key="2"/>
<evidence type="ECO:0000305" key="3"/>
<organism>
    <name type="scientific">Escherichia coli O6:H1 (strain CFT073 / ATCC 700928 / UPEC)</name>
    <dbReference type="NCBI Taxonomy" id="199310"/>
    <lineage>
        <taxon>Bacteria</taxon>
        <taxon>Pseudomonadati</taxon>
        <taxon>Pseudomonadota</taxon>
        <taxon>Gammaproteobacteria</taxon>
        <taxon>Enterobacterales</taxon>
        <taxon>Enterobacteriaceae</taxon>
        <taxon>Escherichia</taxon>
    </lineage>
</organism>
<gene>
    <name type="primary">lolC</name>
    <name type="ordered locus">c1391</name>
</gene>
<comment type="function">
    <text evidence="1">Part of an ATP-dependent transport system LolCDE responsible for the release of lipoproteins targeted to the outer membrane from the inner membrane. Such a release is dependent of the sorting-signal (absence of an Asp at position 2 of the mature lipoprotein) and of LolA (By similarity).</text>
</comment>
<comment type="subcellular location">
    <subcellularLocation>
        <location evidence="1">Cell inner membrane</location>
        <topology evidence="1">Multi-pass membrane protein</topology>
    </subcellularLocation>
</comment>
<comment type="similarity">
    <text evidence="3">Belongs to the ABC-4 integral membrane protein family. LolC/E subfamily.</text>
</comment>
<proteinExistence type="inferred from homology"/>
<keyword id="KW-0997">Cell inner membrane</keyword>
<keyword id="KW-1003">Cell membrane</keyword>
<keyword id="KW-0472">Membrane</keyword>
<keyword id="KW-1185">Reference proteome</keyword>
<keyword id="KW-0812">Transmembrane</keyword>
<keyword id="KW-1133">Transmembrane helix</keyword>
<keyword id="KW-0813">Transport</keyword>
<reference key="1">
    <citation type="journal article" date="2002" name="Proc. Natl. Acad. Sci. U.S.A.">
        <title>Extensive mosaic structure revealed by the complete genome sequence of uropathogenic Escherichia coli.</title>
        <authorList>
            <person name="Welch R.A."/>
            <person name="Burland V."/>
            <person name="Plunkett G. III"/>
            <person name="Redford P."/>
            <person name="Roesch P."/>
            <person name="Rasko D."/>
            <person name="Buckles E.L."/>
            <person name="Liou S.-R."/>
            <person name="Boutin A."/>
            <person name="Hackett J."/>
            <person name="Stroud D."/>
            <person name="Mayhew G.F."/>
            <person name="Rose D.J."/>
            <person name="Zhou S."/>
            <person name="Schwartz D.C."/>
            <person name="Perna N.T."/>
            <person name="Mobley H.L.T."/>
            <person name="Donnenberg M.S."/>
            <person name="Blattner F.R."/>
        </authorList>
    </citation>
    <scope>NUCLEOTIDE SEQUENCE [LARGE SCALE GENOMIC DNA]</scope>
    <source>
        <strain>CFT073 / ATCC 700928 / UPEC</strain>
    </source>
</reference>
<accession>P0ADC4</accession>
<accession>P75956</accession>
<accession>Q9R7N7</accession>
<name>LOLC_ECOL6</name>